<feature type="signal peptide" description="Tat-type signal" evidence="1">
    <location>
        <begin position="1"/>
        <end position="40"/>
    </location>
</feature>
<feature type="chain" id="PRO_1000138707" description="Protein-methionine-sulfoxide reductase catalytic subunit MsrP" evidence="1">
    <location>
        <begin position="41"/>
        <end position="318"/>
    </location>
</feature>
<feature type="binding site" evidence="1">
    <location>
        <position position="72"/>
    </location>
    <ligand>
        <name>Mo-molybdopterin</name>
        <dbReference type="ChEBI" id="CHEBI:71302"/>
    </ligand>
</feature>
<feature type="binding site" evidence="1">
    <location>
        <begin position="75"/>
        <end position="76"/>
    </location>
    <ligand>
        <name>Mo-molybdopterin</name>
        <dbReference type="ChEBI" id="CHEBI:71302"/>
    </ligand>
</feature>
<feature type="binding site" evidence="1">
    <location>
        <position position="130"/>
    </location>
    <ligand>
        <name>Mo-molybdopterin</name>
        <dbReference type="ChEBI" id="CHEBI:71302"/>
    </ligand>
    <ligandPart>
        <name>Mo</name>
        <dbReference type="ChEBI" id="CHEBI:28685"/>
    </ligandPart>
</feature>
<feature type="binding site" evidence="1">
    <location>
        <position position="165"/>
    </location>
    <ligand>
        <name>Mo-molybdopterin</name>
        <dbReference type="ChEBI" id="CHEBI:71302"/>
    </ligand>
</feature>
<feature type="binding site" evidence="1">
    <location>
        <position position="217"/>
    </location>
    <ligand>
        <name>Mo-molybdopterin</name>
        <dbReference type="ChEBI" id="CHEBI:71302"/>
    </ligand>
</feature>
<feature type="binding site" evidence="1">
    <location>
        <position position="222"/>
    </location>
    <ligand>
        <name>Mo-molybdopterin</name>
        <dbReference type="ChEBI" id="CHEBI:71302"/>
    </ligand>
</feature>
<feature type="binding site" evidence="1">
    <location>
        <begin position="233"/>
        <end position="235"/>
    </location>
    <ligand>
        <name>Mo-molybdopterin</name>
        <dbReference type="ChEBI" id="CHEBI:71302"/>
    </ligand>
</feature>
<sequence>MNRFTRYDVTPEAIFNQRRQIIKAMGLGAAALSLPNIGFAAEKSDQLKALNFKDAPKGDFLLTPENKVTGYNNFYEFGVDKASPAKFAKDFKTDPWSLEIAGEVENPFVLNHAQLFNTFPLEERIYRFRCVEAWSMVIPWVGFELARLVEMAKPTSKAKFVIFHTLHDPEQMPGQKNKFFGGGIDYPYVEALTIEEAMNPLTLLSVGLYGKMLPPQNGAPIRLVVPWKYGFKSIKSIVKITFSETRPRTTWEKLAPHEYGFYANVNPNVDHPRWSQASERVIGSGGLLAVKRQDTLMFNGYEKEVAHLYKGLDLKVNF</sequence>
<dbReference type="EC" id="1.8.5.-" evidence="1"/>
<dbReference type="EMBL" id="CP001091">
    <property type="protein sequence ID" value="ACE62571.1"/>
    <property type="molecule type" value="Genomic_DNA"/>
</dbReference>
<dbReference type="RefSeq" id="WP_005619040.1">
    <property type="nucleotide sequence ID" value="NC_010939.1"/>
</dbReference>
<dbReference type="SMR" id="B3GZ85"/>
<dbReference type="GeneID" id="48600128"/>
<dbReference type="KEGG" id="apa:APP7_1919"/>
<dbReference type="HOGENOM" id="CLU_045520_0_0_6"/>
<dbReference type="Proteomes" id="UP000001226">
    <property type="component" value="Chromosome"/>
</dbReference>
<dbReference type="GO" id="GO:0042597">
    <property type="term" value="C:periplasmic space"/>
    <property type="evidence" value="ECO:0007669"/>
    <property type="project" value="UniProtKB-SubCell"/>
</dbReference>
<dbReference type="GO" id="GO:0046872">
    <property type="term" value="F:metal ion binding"/>
    <property type="evidence" value="ECO:0007669"/>
    <property type="project" value="UniProtKB-KW"/>
</dbReference>
<dbReference type="GO" id="GO:0043546">
    <property type="term" value="F:molybdopterin cofactor binding"/>
    <property type="evidence" value="ECO:0007669"/>
    <property type="project" value="UniProtKB-UniRule"/>
</dbReference>
<dbReference type="GO" id="GO:0016672">
    <property type="term" value="F:oxidoreductase activity, acting on a sulfur group of donors, quinone or similar compound as acceptor"/>
    <property type="evidence" value="ECO:0007669"/>
    <property type="project" value="UniProtKB-UniRule"/>
</dbReference>
<dbReference type="GO" id="GO:0030091">
    <property type="term" value="P:protein repair"/>
    <property type="evidence" value="ECO:0007669"/>
    <property type="project" value="UniProtKB-UniRule"/>
</dbReference>
<dbReference type="Gene3D" id="3.90.420.10">
    <property type="entry name" value="Oxidoreductase, molybdopterin-binding domain"/>
    <property type="match status" value="1"/>
</dbReference>
<dbReference type="HAMAP" id="MF_01206">
    <property type="entry name" value="MsrP"/>
    <property type="match status" value="1"/>
</dbReference>
<dbReference type="InterPro" id="IPR022867">
    <property type="entry name" value="MsrP"/>
</dbReference>
<dbReference type="InterPro" id="IPR000572">
    <property type="entry name" value="OxRdtase_Mopterin-bd_dom"/>
</dbReference>
<dbReference type="InterPro" id="IPR036374">
    <property type="entry name" value="OxRdtase_Mopterin-bd_sf"/>
</dbReference>
<dbReference type="NCBIfam" id="NF003767">
    <property type="entry name" value="PRK05363.1"/>
    <property type="match status" value="1"/>
</dbReference>
<dbReference type="PANTHER" id="PTHR43032">
    <property type="entry name" value="PROTEIN-METHIONINE-SULFOXIDE REDUCTASE"/>
    <property type="match status" value="1"/>
</dbReference>
<dbReference type="PANTHER" id="PTHR43032:SF3">
    <property type="entry name" value="PROTEIN-METHIONINE-SULFOXIDE REDUCTASE CATALYTIC SUBUNIT MSRP"/>
    <property type="match status" value="1"/>
</dbReference>
<dbReference type="Pfam" id="PF00174">
    <property type="entry name" value="Oxidored_molyb"/>
    <property type="match status" value="1"/>
</dbReference>
<dbReference type="SUPFAM" id="SSF56524">
    <property type="entry name" value="Oxidoreductase molybdopterin-binding domain"/>
    <property type="match status" value="1"/>
</dbReference>
<name>MSRP_ACTP7</name>
<keyword id="KW-0479">Metal-binding</keyword>
<keyword id="KW-0500">Molybdenum</keyword>
<keyword id="KW-0560">Oxidoreductase</keyword>
<keyword id="KW-0574">Periplasm</keyword>
<keyword id="KW-0732">Signal</keyword>
<comment type="function">
    <text evidence="1">Part of the MsrPQ system that repairs oxidized periplasmic proteins containing methionine sulfoxide residues (Met-O), using respiratory chain electrons. Thus protects these proteins from oxidative-stress damage caused by reactive species of oxygen and chlorine generated by the host defense mechanisms. MsrPQ is essential for the maintenance of envelope integrity under bleach stress, rescuing a wide series of structurally unrelated periplasmic proteins from methionine oxidation. The catalytic subunit MsrP is non-stereospecific, being able to reduce both (R-) and (S-) diastereoisomers of methionine sulfoxide.</text>
</comment>
<comment type="catalytic activity">
    <reaction evidence="1">
        <text>L-methionyl-[protein] + a quinone + H2O = L-methionyl-(S)-S-oxide-[protein] + a quinol</text>
        <dbReference type="Rhea" id="RHEA:51292"/>
        <dbReference type="Rhea" id="RHEA-COMP:12313"/>
        <dbReference type="Rhea" id="RHEA-COMP:12315"/>
        <dbReference type="ChEBI" id="CHEBI:15377"/>
        <dbReference type="ChEBI" id="CHEBI:16044"/>
        <dbReference type="ChEBI" id="CHEBI:24646"/>
        <dbReference type="ChEBI" id="CHEBI:44120"/>
        <dbReference type="ChEBI" id="CHEBI:132124"/>
    </reaction>
</comment>
<comment type="catalytic activity">
    <reaction evidence="1">
        <text>L-methionyl-[protein] + a quinone + H2O = L-methionyl-(R)-S-oxide-[protein] + a quinol</text>
        <dbReference type="Rhea" id="RHEA:51296"/>
        <dbReference type="Rhea" id="RHEA-COMP:12313"/>
        <dbReference type="Rhea" id="RHEA-COMP:12314"/>
        <dbReference type="ChEBI" id="CHEBI:15377"/>
        <dbReference type="ChEBI" id="CHEBI:16044"/>
        <dbReference type="ChEBI" id="CHEBI:24646"/>
        <dbReference type="ChEBI" id="CHEBI:45764"/>
        <dbReference type="ChEBI" id="CHEBI:132124"/>
    </reaction>
</comment>
<comment type="cofactor">
    <cofactor evidence="1">
        <name>Mo-molybdopterin</name>
        <dbReference type="ChEBI" id="CHEBI:71302"/>
    </cofactor>
    <text evidence="1">Binds 1 Mo-molybdopterin (Mo-MPT) cofactor per subunit.</text>
</comment>
<comment type="subunit">
    <text evidence="1">Heterodimer of a catalytic subunit (MsrP) and a heme-binding subunit (MsrQ).</text>
</comment>
<comment type="subcellular location">
    <subcellularLocation>
        <location evidence="1">Periplasm</location>
    </subcellularLocation>
    <text evidence="1">Is attached to the inner membrane when interacting with the MsrQ subunit.</text>
</comment>
<comment type="PTM">
    <text evidence="1">Predicted to be exported by the Tat system. The position of the signal peptide cleavage has not been experimentally proven.</text>
</comment>
<comment type="similarity">
    <text evidence="1">Belongs to the MsrP family.</text>
</comment>
<accession>B3GZ85</accession>
<proteinExistence type="inferred from homology"/>
<reference key="1">
    <citation type="submission" date="2008-06" db="EMBL/GenBank/DDBJ databases">
        <title>Genome and proteome analysis of A. pleuropneumoniae serotype 7.</title>
        <authorList>
            <person name="Linke B."/>
            <person name="Buettner F."/>
            <person name="Martinez-Arias R."/>
            <person name="Goesmann A."/>
            <person name="Baltes N."/>
            <person name="Tegetmeyer H."/>
            <person name="Singh M."/>
            <person name="Gerlach G.F."/>
        </authorList>
    </citation>
    <scope>NUCLEOTIDE SEQUENCE [LARGE SCALE GENOMIC DNA]</scope>
    <source>
        <strain>AP76</strain>
    </source>
</reference>
<gene>
    <name evidence="1" type="primary">msrP</name>
    <name type="ordered locus">APP7_1919</name>
</gene>
<protein>
    <recommendedName>
        <fullName evidence="1">Protein-methionine-sulfoxide reductase catalytic subunit MsrP</fullName>
        <ecNumber evidence="1">1.8.5.-</ecNumber>
    </recommendedName>
</protein>
<evidence type="ECO:0000255" key="1">
    <source>
        <dbReference type="HAMAP-Rule" id="MF_01206"/>
    </source>
</evidence>
<organism>
    <name type="scientific">Actinobacillus pleuropneumoniae serotype 7 (strain AP76)</name>
    <dbReference type="NCBI Taxonomy" id="537457"/>
    <lineage>
        <taxon>Bacteria</taxon>
        <taxon>Pseudomonadati</taxon>
        <taxon>Pseudomonadota</taxon>
        <taxon>Gammaproteobacteria</taxon>
        <taxon>Pasteurellales</taxon>
        <taxon>Pasteurellaceae</taxon>
        <taxon>Actinobacillus</taxon>
    </lineage>
</organism>